<protein>
    <recommendedName>
        <fullName evidence="2">RNA-binding protein Hfq</fullName>
    </recommendedName>
</protein>
<proteinExistence type="evidence at protein level"/>
<reference evidence="4" key="1">
    <citation type="submission" date="2012-05" db="UniProtKB">
        <authorList>
            <person name="Diptendu S."/>
            <person name="Goutam P."/>
        </authorList>
    </citation>
    <scope>PROTEIN SEQUENCE</scope>
    <source>
        <strain>DSGPM4</strain>
    </source>
</reference>
<organism>
    <name type="scientific">Pseudomonas aeruginosa</name>
    <dbReference type="NCBI Taxonomy" id="287"/>
    <lineage>
        <taxon>Bacteria</taxon>
        <taxon>Pseudomonadati</taxon>
        <taxon>Pseudomonadota</taxon>
        <taxon>Gammaproteobacteria</taxon>
        <taxon>Pseudomonadales</taxon>
        <taxon>Pseudomonadaceae</taxon>
        <taxon>Pseudomonas</taxon>
    </lineage>
</organism>
<keyword id="KW-0903">Direct protein sequencing</keyword>
<keyword id="KW-0694">RNA-binding</keyword>
<keyword id="KW-0346">Stress response</keyword>
<accession>B3EWP0</accession>
<name>HFQ_PSEAI</name>
<comment type="function">
    <text evidence="1 2">RNA chaperone that binds small regulatory RNA (sRNAs) and mRNAs to facilitate mRNA translational regulation in response to envelope stress, environmental stress and changes in metabolite concentrations. Also binds with high specificity to tRNAs.</text>
</comment>
<comment type="subunit">
    <text evidence="1 2">Homohexamer.</text>
</comment>
<comment type="similarity">
    <text evidence="2">Belongs to the Hfq family.</text>
</comment>
<dbReference type="SMR" id="B3EWP0"/>
<dbReference type="eggNOG" id="COG1923">
    <property type="taxonomic scope" value="Bacteria"/>
</dbReference>
<dbReference type="GO" id="GO:0005829">
    <property type="term" value="C:cytosol"/>
    <property type="evidence" value="ECO:0007669"/>
    <property type="project" value="TreeGrafter"/>
</dbReference>
<dbReference type="GO" id="GO:0003723">
    <property type="term" value="F:RNA binding"/>
    <property type="evidence" value="ECO:0007669"/>
    <property type="project" value="UniProtKB-UniRule"/>
</dbReference>
<dbReference type="GO" id="GO:0006355">
    <property type="term" value="P:regulation of DNA-templated transcription"/>
    <property type="evidence" value="ECO:0007669"/>
    <property type="project" value="InterPro"/>
</dbReference>
<dbReference type="GO" id="GO:0043487">
    <property type="term" value="P:regulation of RNA stability"/>
    <property type="evidence" value="ECO:0007669"/>
    <property type="project" value="TreeGrafter"/>
</dbReference>
<dbReference type="GO" id="GO:0045974">
    <property type="term" value="P:regulation of translation, ncRNA-mediated"/>
    <property type="evidence" value="ECO:0007669"/>
    <property type="project" value="TreeGrafter"/>
</dbReference>
<dbReference type="CDD" id="cd01716">
    <property type="entry name" value="Hfq"/>
    <property type="match status" value="1"/>
</dbReference>
<dbReference type="FunFam" id="2.30.30.100:FF:000001">
    <property type="entry name" value="RNA-binding protein Hfq"/>
    <property type="match status" value="1"/>
</dbReference>
<dbReference type="Gene3D" id="2.30.30.100">
    <property type="match status" value="1"/>
</dbReference>
<dbReference type="HAMAP" id="MF_00436">
    <property type="entry name" value="Hfq"/>
    <property type="match status" value="1"/>
</dbReference>
<dbReference type="InterPro" id="IPR005001">
    <property type="entry name" value="Hfq"/>
</dbReference>
<dbReference type="InterPro" id="IPR010920">
    <property type="entry name" value="LSM_dom_sf"/>
</dbReference>
<dbReference type="InterPro" id="IPR047575">
    <property type="entry name" value="Sm"/>
</dbReference>
<dbReference type="NCBIfam" id="TIGR02383">
    <property type="entry name" value="Hfq"/>
    <property type="match status" value="1"/>
</dbReference>
<dbReference type="NCBIfam" id="NF001602">
    <property type="entry name" value="PRK00395.1"/>
    <property type="match status" value="1"/>
</dbReference>
<dbReference type="PANTHER" id="PTHR34772">
    <property type="entry name" value="RNA-BINDING PROTEIN HFQ"/>
    <property type="match status" value="1"/>
</dbReference>
<dbReference type="PANTHER" id="PTHR34772:SF1">
    <property type="entry name" value="RNA-BINDING PROTEIN HFQ"/>
    <property type="match status" value="1"/>
</dbReference>
<dbReference type="Pfam" id="PF17209">
    <property type="entry name" value="Hfq"/>
    <property type="match status" value="1"/>
</dbReference>
<dbReference type="SUPFAM" id="SSF50182">
    <property type="entry name" value="Sm-like ribonucleoproteins"/>
    <property type="match status" value="1"/>
</dbReference>
<dbReference type="PROSITE" id="PS52002">
    <property type="entry name" value="SM"/>
    <property type="match status" value="1"/>
</dbReference>
<feature type="chain" id="PRO_0000419337" description="RNA-binding protein Hfq">
    <location>
        <begin position="1"/>
        <end position="82"/>
    </location>
</feature>
<feature type="domain" description="Sm" evidence="3">
    <location>
        <begin position="9"/>
        <end position="68"/>
    </location>
</feature>
<evidence type="ECO:0000250" key="1">
    <source>
        <dbReference type="UniProtKB" id="P0A6X3"/>
    </source>
</evidence>
<evidence type="ECO:0000255" key="2">
    <source>
        <dbReference type="HAMAP-Rule" id="MF_00436"/>
    </source>
</evidence>
<evidence type="ECO:0000255" key="3">
    <source>
        <dbReference type="PROSITE-ProRule" id="PRU01346"/>
    </source>
</evidence>
<evidence type="ECO:0000305" key="4"/>
<gene>
    <name evidence="2" type="primary">hfq</name>
</gene>
<sequence>MSKGHSLQDPYLNTLRKERVPVSIYLVNGIKLQGQIESFDQFVILLKNTVSQMVYKTAISTVVPSRPVRLPSGDQPAEPGNA</sequence>